<gene>
    <name type="primary">ipgD</name>
    <name type="ordered locus">CP0133</name>
</gene>
<feature type="chain" id="PRO_0000220487" description="Inositol phosphate phosphatase IpgD">
    <location>
        <begin position="1"/>
        <end position="538"/>
    </location>
</feature>
<feature type="short sequence motif" description="CX5R motif">
    <location>
        <begin position="439"/>
        <end position="445"/>
    </location>
</feature>
<feature type="active site" evidence="1">
    <location>
        <position position="439"/>
    </location>
</feature>
<feature type="sequence variant" description="In plasmid pINV_F6_M1382.">
    <original>KH</original>
    <variation>NQ</variation>
    <location>
        <begin position="27"/>
        <end position="28"/>
    </location>
</feature>
<feature type="sequence variant" description="In plasmid pINV_F6_M1382.">
    <original>I</original>
    <variation>V</variation>
    <location>
        <position position="48"/>
    </location>
</feature>
<feature type="sequence variant" description="In plasmid pINV_F6_M1382.">
    <original>S</original>
    <variation>G</variation>
    <location>
        <position position="66"/>
    </location>
</feature>
<feature type="sequence variant" description="In plasmid pINV_F6_M1382.">
    <original>KAEVFC</original>
    <variation>RAAVFY</variation>
    <location>
        <begin position="73"/>
        <end position="78"/>
    </location>
</feature>
<feature type="sequence variant" description="In plasmid pCP301.">
    <original>K</original>
    <variation>R</variation>
    <location>
        <position position="73"/>
    </location>
</feature>
<feature type="sequence variant" description="In plasmid pINV_F6_M1382.">
    <original>R</original>
    <variation>Q</variation>
    <location>
        <position position="97"/>
    </location>
</feature>
<feature type="sequence variant" description="In plasmid pINV_F6_M1382.">
    <original>N</original>
    <variation>D</variation>
    <location>
        <position position="107"/>
    </location>
</feature>
<feature type="sequence variant" description="In plasmid pINV_F6_M1382.">
    <original>H</original>
    <variation>N</variation>
    <location>
        <position position="110"/>
    </location>
</feature>
<feature type="sequence variant" description="In plasmid pINV_F6_M1382.">
    <original>TK</original>
    <variation>SE</variation>
    <location>
        <begin position="136"/>
        <end position="137"/>
    </location>
</feature>
<feature type="sequence variant" description="In plasmid pINV_F6_M1382.">
    <original>D</original>
    <variation>N</variation>
    <location>
        <position position="144"/>
    </location>
</feature>
<feature type="sequence variant" description="In plasmid pINV_F6_M1382.">
    <original>GPV</original>
    <variation>EPI</variation>
    <location>
        <begin position="152"/>
        <end position="154"/>
    </location>
</feature>
<feature type="sequence variant" description="In plasmid pCP301.">
    <original>N</original>
    <variation>D</variation>
    <location>
        <position position="155"/>
    </location>
</feature>
<feature type="sequence variant" description="In plasmid pINV_F6_M1382.">
    <original>SHH</original>
    <variation>NYN</variation>
    <location>
        <begin position="159"/>
        <end position="161"/>
    </location>
</feature>
<feature type="sequence variant" description="In plasmid pCP301 and plasmid pINV_F6_M1382.">
    <original>S</original>
    <variation>G</variation>
    <location>
        <position position="166"/>
    </location>
</feature>
<feature type="sequence variant" description="In plasmid pINV_F6_M1382.">
    <original>RD</original>
    <variation>SK</variation>
    <location>
        <begin position="200"/>
        <end position="201"/>
    </location>
</feature>
<feature type="sequence variant" description="In plasmid pCP301.">
    <original>R</original>
    <variation>S</variation>
    <location>
        <position position="200"/>
    </location>
</feature>
<feature type="sequence variant" description="In plasmid pINV_F6_M1382.">
    <original>V</original>
    <variation>A</variation>
    <location>
        <position position="252"/>
    </location>
</feature>
<feature type="sequence variant" description="In plasmid pINV_F6_M1382.">
    <original>P</original>
    <variation>Q</variation>
    <location>
        <position position="260"/>
    </location>
</feature>
<feature type="sequence variant" description="In plasmid pINV_F6_M1382.">
    <original>S</original>
    <variation>K</variation>
    <location>
        <position position="300"/>
    </location>
</feature>
<feature type="sequence variant" description="In plasmid pCP301.">
    <original>S</original>
    <variation>N</variation>
    <location>
        <position position="300"/>
    </location>
</feature>
<feature type="sequence variant" description="In plasmid pINV_F6_M1382.">
    <original>G</original>
    <variation>E</variation>
    <location>
        <position position="304"/>
    </location>
</feature>
<feature type="sequence variant" description="In plasmid pCP301 and plasmid pINV_F6_M1382.">
    <original>G</original>
    <variation>E</variation>
    <location>
        <position position="311"/>
    </location>
</feature>
<feature type="sequence variant" description="In plasmid pINV_F6_M1382.">
    <original>K</original>
    <variation>Q</variation>
    <location>
        <position position="325"/>
    </location>
</feature>
<feature type="sequence variant" description="In plasmid pINV_F6_M1382.">
    <original>S</original>
    <variation>K</variation>
    <location>
        <position position="328"/>
    </location>
</feature>
<feature type="sequence variant" description="In plasmid pINV_F6_M1382.">
    <original>D</original>
    <variation>G</variation>
    <location>
        <position position="359"/>
    </location>
</feature>
<feature type="sequence variant" description="In plasmid pINV_F6_M1382.">
    <original>VNN</original>
    <variation>LNK</variation>
    <location>
        <begin position="405"/>
        <end position="407"/>
    </location>
</feature>
<feature type="sequence variant" description="In plasmid pCP301.">
    <original>NN</original>
    <variation>TK</variation>
    <location>
        <begin position="406"/>
        <end position="407"/>
    </location>
</feature>
<feature type="sequence variant" description="In plasmid pINV_F6_M1382.">
    <original>VT</original>
    <variation>MA</variation>
    <location>
        <begin position="424"/>
        <end position="425"/>
    </location>
</feature>
<feature type="sequence variant" description="In plasmid pCP301.">
    <original>V</original>
    <variation>M</variation>
    <location>
        <position position="424"/>
    </location>
</feature>
<feature type="sequence variant" description="In plasmid pINV_F6_M1382.">
    <original>S</original>
    <variation>A</variation>
    <location>
        <position position="519"/>
    </location>
</feature>
<feature type="mutagenesis site" description="Loss of activity." evidence="3">
    <original>C</original>
    <variation>S</variation>
    <location>
        <position position="439"/>
    </location>
</feature>
<proteinExistence type="evidence at protein level"/>
<sequence length="538" mass="59833">MHITNLGLHQVSFQSGDSYKGAEETGKHKGVSVISYQRVKNGERNKGIEALNRLYLQNQTSLTGKSLLFARDKAEVFCEAIKLAGGDTSKIKAMMERLDTYKLGEVNKRHINELNKVISEEIRAQLGIKNKKELQTKIKQIFTDYLNNKNWGPVNKNISHHGKNYSFQLTPASHMKIGNKNIFVKEYNGKGICCASTRERDHIANMWLSKVVDDEGKEIFSGIRHGVISAYGLKKNSSERAVAARNKAEELVSAALYSRPELLSQALSGKTVDLKIVSTSLLTPTSLTGGEESMLKDQVSALKGLNSKRGGPTKLLIRNSDGLLKEVSVNLKVVTFNFGVNELALKMGLGWRNVDKLNDESICSLLGDNFLKNGVIGGWAAEAIEKNPPCKNDVIYLANQIKEIVNNKLQKNDNGEPYKLSQRVTLLAYTIGAVPCWNCKSGKDRTGMQDAEIKREIIRKHETGQFSQLNSKLSSEEKRLFSTILMNSGNMEIQEMNTGVPGNKVMKKLPLSSLELSYSERIGDPKIWNMVKGYSSFV</sequence>
<keyword id="KW-0378">Hydrolase</keyword>
<keyword id="KW-0614">Plasmid</keyword>
<keyword id="KW-1185">Reference proteome</keyword>
<keyword id="KW-0964">Secreted</keyword>
<keyword id="KW-0843">Virulence</keyword>
<organism>
    <name type="scientific">Shigella flexneri</name>
    <dbReference type="NCBI Taxonomy" id="623"/>
    <lineage>
        <taxon>Bacteria</taxon>
        <taxon>Pseudomonadati</taxon>
        <taxon>Pseudomonadota</taxon>
        <taxon>Gammaproteobacteria</taxon>
        <taxon>Enterobacterales</taxon>
        <taxon>Enterobacteriaceae</taxon>
        <taxon>Shigella</taxon>
    </lineage>
</organism>
<name>IPGD_SHIFL</name>
<protein>
    <recommendedName>
        <fullName>Inositol phosphate phosphatase IpgD</fullName>
        <ecNumber>3.1.3.78</ecNumber>
    </recommendedName>
    <alternativeName>
        <fullName>Effector protein IpgD</fullName>
    </alternativeName>
    <alternativeName>
        <fullName>Phosphatidylinositol 4,5-bisphosphate 4-phosphatase</fullName>
    </alternativeName>
</protein>
<accession>Q07566</accession>
<accession>Q6XVY4</accession>
<accession>Q8VSH4</accession>
<evidence type="ECO:0000255" key="1"/>
<evidence type="ECO:0000269" key="2">
    <source>
    </source>
</evidence>
<evidence type="ECO:0000269" key="3">
    <source>
    </source>
</evidence>
<evidence type="ECO:0000269" key="4">
    <source>
    </source>
</evidence>
<evidence type="ECO:0000305" key="5"/>
<reference key="1">
    <citation type="journal article" date="1993" name="Infect. Immun.">
        <title>Characterization of the Shigella flexneri ipgD and ipgF genes, which are located in the proximal part of the mxi locus.</title>
        <authorList>
            <person name="Allaoui A."/>
            <person name="Menard R."/>
            <person name="Sansonetti P.J."/>
            <person name="Parsot C."/>
        </authorList>
    </citation>
    <scope>NUCLEOTIDE SEQUENCE [GENOMIC DNA]</scope>
    <scope>SUBCELLULAR LOCATION</scope>
    <scope>INDUCTION</scope>
    <source>
        <strain>M90T / Serotype 5a</strain>
        <plasmid>pWR100</plasmid>
    </source>
</reference>
<reference key="2">
    <citation type="journal article" date="2000" name="Mol. Microbiol.">
        <title>The virulence plasmid pWR100 and the repertoire of proteins secreted by the type III secretion apparatus of Shigella flexneri.</title>
        <authorList>
            <person name="Buchrieser C."/>
            <person name="Glaser P."/>
            <person name="Rusniok C."/>
            <person name="Nedjari H."/>
            <person name="d'Hauteville H."/>
            <person name="Kunst F."/>
            <person name="Sansonetti P.J."/>
            <person name="Parsot C."/>
        </authorList>
    </citation>
    <scope>NUCLEOTIDE SEQUENCE [GENOMIC DNA]</scope>
    <source>
        <strain>M90T / Serotype 5a</strain>
        <plasmid>pWR100</plasmid>
    </source>
</reference>
<reference key="3">
    <citation type="journal article" date="2001" name="Infect. Immun.">
        <title>Complete DNA sequence and analysis of the large virulence plasmid of Shigella flexneri.</title>
        <authorList>
            <person name="Venkatesan M.M."/>
            <person name="Goldberg M.B."/>
            <person name="Rose D.J."/>
            <person name="Grotbeck E.J."/>
            <person name="Burland V."/>
            <person name="Blattner F.R."/>
        </authorList>
    </citation>
    <scope>NUCLEOTIDE SEQUENCE [GENOMIC DNA]</scope>
    <source>
        <strain>M90T / Serotype 5a</strain>
        <plasmid>pWR501</plasmid>
    </source>
</reference>
<reference key="4">
    <citation type="journal article" date="2002" name="Nucleic Acids Res.">
        <title>Genome sequence of Shigella flexneri 2a: insights into pathogenicity through comparison with genomes of Escherichia coli K12 and O157.</title>
        <authorList>
            <person name="Jin Q."/>
            <person name="Yuan Z."/>
            <person name="Xu J."/>
            <person name="Wang Y."/>
            <person name="Shen Y."/>
            <person name="Lu W."/>
            <person name="Wang J."/>
            <person name="Liu H."/>
            <person name="Yang J."/>
            <person name="Yang F."/>
            <person name="Zhang X."/>
            <person name="Zhang J."/>
            <person name="Yang G."/>
            <person name="Wu H."/>
            <person name="Qu D."/>
            <person name="Dong J."/>
            <person name="Sun L."/>
            <person name="Xue Y."/>
            <person name="Zhao A."/>
            <person name="Gao Y."/>
            <person name="Zhu J."/>
            <person name="Kan B."/>
            <person name="Ding K."/>
            <person name="Chen S."/>
            <person name="Cheng H."/>
            <person name="Yao Z."/>
            <person name="He B."/>
            <person name="Chen R."/>
            <person name="Ma D."/>
            <person name="Qiang B."/>
            <person name="Wen Y."/>
            <person name="Hou Y."/>
            <person name="Yu J."/>
        </authorList>
    </citation>
    <scope>NUCLEOTIDE SEQUENCE [LARGE SCALE GENOMIC DNA]</scope>
    <source>
        <strain>301 / Serotype 2a</strain>
        <plasmid>pCP301</plasmid>
    </source>
</reference>
<reference key="5">
    <citation type="journal article" date="2003" name="Infect. Immun.">
        <title>Comparison of two major forms of the Shigella virulence plasmid pINV: positive selection is a major force driving the divergence.</title>
        <authorList>
            <person name="Lan R."/>
            <person name="Stevenson G."/>
            <person name="Reeves P.R."/>
        </authorList>
    </citation>
    <scope>NUCLEOTIDE SEQUENCE [GENOMIC DNA]</scope>
    <source>
        <strain>M1382 / Serotype 6</strain>
        <plasmid>pINV_F6_M1382</plasmid>
    </source>
</reference>
<reference key="6">
    <citation type="journal article" date="2000" name="Mol. Microbiol.">
        <title>IpgD, a protein secreted by the type III secretion machinery of Shigella flexneri, is chaperoned by IpgE and implicated in entry focus formation.</title>
        <authorList>
            <person name="Niebuhr K."/>
            <person name="Jouihri N."/>
            <person name="Allaoui A."/>
            <person name="Gounon P."/>
            <person name="Sansonetti P.J."/>
            <person name="Parsot C."/>
        </authorList>
    </citation>
    <scope>FUNCTION</scope>
    <scope>INTERACTION WITH IPAA</scope>
    <scope>SUBCELLULAR LOCATION</scope>
    <source>
        <strain>M90T / Serotype 5a</strain>
    </source>
</reference>
<reference key="7">
    <citation type="journal article" date="2002" name="EMBO J.">
        <title>Conversion of PtdIns(4,5)P(2) into PtdIns(5)P by the S.flexneri effector IpgD reorganizes host cell morphology.</title>
        <authorList>
            <person name="Niebuhr K."/>
            <person name="Giuriato S."/>
            <person name="Pedron T."/>
            <person name="Philpott D.J."/>
            <person name="Gaits F."/>
            <person name="Sable J."/>
            <person name="Sheetz M.P."/>
            <person name="Parsot C."/>
            <person name="Sansonetti P.J."/>
            <person name="Payrastre B."/>
        </authorList>
    </citation>
    <scope>FUNCTION</scope>
    <scope>MUTAGENESIS OF CYS-439</scope>
    <source>
        <strain>M90T / Serotype 5a</strain>
    </source>
</reference>
<geneLocation type="plasmid">
    <name>pWR100</name>
</geneLocation>
<geneLocation type="plasmid">
    <name>pWR501</name>
</geneLocation>
<geneLocation type="plasmid">
    <name>pCP301</name>
</geneLocation>
<geneLocation type="plasmid">
    <name>pINV_F6_M1382</name>
</geneLocation>
<dbReference type="EC" id="3.1.3.78"/>
<dbReference type="EMBL" id="L04309">
    <property type="protein sequence ID" value="AAA26517.1"/>
    <property type="molecule type" value="Genomic_DNA"/>
</dbReference>
<dbReference type="EMBL" id="AL391753">
    <property type="protein sequence ID" value="CAC05808.1"/>
    <property type="molecule type" value="Genomic_DNA"/>
</dbReference>
<dbReference type="EMBL" id="AF348706">
    <property type="protein sequence ID" value="AAK18452.1"/>
    <property type="molecule type" value="Genomic_DNA"/>
</dbReference>
<dbReference type="EMBL" id="AF386526">
    <property type="protein sequence ID" value="AAL72339.1"/>
    <property type="molecule type" value="Genomic_DNA"/>
</dbReference>
<dbReference type="EMBL" id="AY206439">
    <property type="protein sequence ID" value="AAP78996.1"/>
    <property type="molecule type" value="Genomic_DNA"/>
</dbReference>
<dbReference type="RefSeq" id="NP_085296.1">
    <property type="nucleotide sequence ID" value="NC_002698.1"/>
</dbReference>
<dbReference type="RefSeq" id="NP_858266.1">
    <property type="nucleotide sequence ID" value="NC_004851.1"/>
</dbReference>
<dbReference type="RefSeq" id="WP_000548322.1">
    <property type="nucleotide sequence ID" value="NZ_UIPM01000036.1"/>
</dbReference>
<dbReference type="RefSeq" id="WP_010921667.1">
    <property type="nucleotide sequence ID" value="NZ_QWST01000007.1"/>
</dbReference>
<dbReference type="RefSeq" id="YP_009062490.1">
    <property type="nucleotide sequence ID" value="NC_024996.1"/>
</dbReference>
<dbReference type="SMR" id="Q07566"/>
<dbReference type="PaxDb" id="198214-CP0133"/>
<dbReference type="GeneID" id="1238042"/>
<dbReference type="KEGG" id="sfl:CP0133"/>
<dbReference type="PATRIC" id="fig|198214.7.peg.5387"/>
<dbReference type="HOGENOM" id="CLU_025781_1_0_6"/>
<dbReference type="BioCyc" id="MetaCyc:MONOMER-14263"/>
<dbReference type="BRENDA" id="3.1.3.78">
    <property type="organism ID" value="5712"/>
</dbReference>
<dbReference type="Proteomes" id="UP000001006">
    <property type="component" value="Plasmid pCP301"/>
</dbReference>
<dbReference type="GO" id="GO:0005576">
    <property type="term" value="C:extracellular region"/>
    <property type="evidence" value="ECO:0007669"/>
    <property type="project" value="UniProtKB-SubCell"/>
</dbReference>
<dbReference type="GO" id="GO:0034597">
    <property type="term" value="F:phosphatidylinositol-4,5-bisphosphate 4-phosphatase activity"/>
    <property type="evidence" value="ECO:0007669"/>
    <property type="project" value="UniProtKB-EC"/>
</dbReference>
<dbReference type="InterPro" id="IPR008108">
    <property type="entry name" value="IpgD/SopB"/>
</dbReference>
<dbReference type="NCBIfam" id="NF011905">
    <property type="entry name" value="PRK15378.1"/>
    <property type="match status" value="1"/>
</dbReference>
<dbReference type="Pfam" id="PF05925">
    <property type="entry name" value="IpgD"/>
    <property type="match status" value="1"/>
</dbReference>
<dbReference type="PRINTS" id="PR01734">
    <property type="entry name" value="TYPE3OMBPROT"/>
</dbReference>
<comment type="function">
    <text evidence="2 3">Converts phosphatidylinositol 4,5-bisphosphate (PtdIns 4,5-P2) to PtdIns 5-P. IpgD is injected by Shigella into the host cell and is required for invasion. The accumulation of PtdIns 5-P causes membrane ruffling and actin cytoskeleton rearrangements at the entry site. Acts in concert with IpaA to coordinate and control the membrane and cytoskeletal rearrangements induced early after invasion of the host cell.</text>
</comment>
<comment type="catalytic activity">
    <reaction>
        <text>a 1,2-diacyl-sn-glycero-3-phospho-(1D-myo-inositol-4,5-bisphosphate) + H2O = a 1,2-diacyl-sn-glycero-3-phospho-(1D-myo-inositol-5-phosphate) + phosphate</text>
        <dbReference type="Rhea" id="RHEA:25674"/>
        <dbReference type="ChEBI" id="CHEBI:15377"/>
        <dbReference type="ChEBI" id="CHEBI:43474"/>
        <dbReference type="ChEBI" id="CHEBI:57795"/>
        <dbReference type="ChEBI" id="CHEBI:58456"/>
        <dbReference type="EC" id="3.1.3.78"/>
    </reaction>
</comment>
<comment type="subcellular location">
    <subcellularLocation>
        <location evidence="2 4">Secreted</location>
    </subcellularLocation>
    <text>Secreted via the Mxi-Spa type III secretion system. It is stored in the bacterial cytoplasm associated with the chaperone IpgE before being secreted in response to activation of the type III secretion system.</text>
</comment>
<comment type="induction">
    <text evidence="4">By growth at 37 degrees Celsius.</text>
</comment>
<comment type="domain">
    <text>Contains the consensus sequence Cys-X(5)-Arg characteristic of Mg-independent phosphatases.</text>
</comment>
<comment type="similarity">
    <text evidence="5">Belongs to the phosphatase IpgD/SopB family.</text>
</comment>